<feature type="chain" id="PRO_1000138174" description="Cell division inhibitor SulA">
    <location>
        <begin position="1"/>
        <end position="168"/>
    </location>
</feature>
<feature type="region of interest" description="FtsZ binding" evidence="1">
    <location>
        <begin position="106"/>
        <end position="112"/>
    </location>
</feature>
<feature type="region of interest" description="Lon protease binding" evidence="1">
    <location>
        <begin position="161"/>
        <end position="168"/>
    </location>
</feature>
<feature type="site" description="Essential for degradation by Lon protease" evidence="1">
    <location>
        <position position="168"/>
    </location>
</feature>
<sequence length="168" mass="19060">MRTQSLKPYHANYHSLTTNDSPTRVDAPTDSGLISEFVYSENQPVVTQLLLPLLQQLSKQSRWLLWLTPQQKLSRSWLKQSGLPINKVVQLRQINPLSTVEAMEKALLTGNYSVVLGWLPELTEDDRIRLRLAAKLGNAYGFVMRPLNDTKVGSGQCATLKIHSYLYH</sequence>
<gene>
    <name evidence="1" type="primary">sulA</name>
    <name type="ordered locus">YpAngola_A3200</name>
</gene>
<name>SULA_YERPG</name>
<reference key="1">
    <citation type="journal article" date="2010" name="J. Bacteriol.">
        <title>Genome sequence of the deep-rooted Yersinia pestis strain Angola reveals new insights into the evolution and pangenome of the plague bacterium.</title>
        <authorList>
            <person name="Eppinger M."/>
            <person name="Worsham P.L."/>
            <person name="Nikolich M.P."/>
            <person name="Riley D.R."/>
            <person name="Sebastian Y."/>
            <person name="Mou S."/>
            <person name="Achtman M."/>
            <person name="Lindler L.E."/>
            <person name="Ravel J."/>
        </authorList>
    </citation>
    <scope>NUCLEOTIDE SEQUENCE [LARGE SCALE GENOMIC DNA]</scope>
    <source>
        <strain>Angola</strain>
    </source>
</reference>
<dbReference type="EMBL" id="CP000901">
    <property type="protein sequence ID" value="ABX86701.1"/>
    <property type="molecule type" value="Genomic_DNA"/>
</dbReference>
<dbReference type="RefSeq" id="WP_002213065.1">
    <property type="nucleotide sequence ID" value="NZ_CP009935.1"/>
</dbReference>
<dbReference type="SMR" id="A9R2N0"/>
<dbReference type="GeneID" id="57977127"/>
<dbReference type="KEGG" id="ypg:YpAngola_A3200"/>
<dbReference type="PATRIC" id="fig|349746.12.peg.4261"/>
<dbReference type="GO" id="GO:0000917">
    <property type="term" value="P:division septum assembly"/>
    <property type="evidence" value="ECO:0007669"/>
    <property type="project" value="UniProtKB-KW"/>
</dbReference>
<dbReference type="GO" id="GO:0006281">
    <property type="term" value="P:DNA repair"/>
    <property type="evidence" value="ECO:0007669"/>
    <property type="project" value="TreeGrafter"/>
</dbReference>
<dbReference type="GO" id="GO:0051782">
    <property type="term" value="P:negative regulation of cell division"/>
    <property type="evidence" value="ECO:0007669"/>
    <property type="project" value="UniProtKB-UniRule"/>
</dbReference>
<dbReference type="GO" id="GO:0009432">
    <property type="term" value="P:SOS response"/>
    <property type="evidence" value="ECO:0007669"/>
    <property type="project" value="UniProtKB-UniRule"/>
</dbReference>
<dbReference type="FunFam" id="3.40.50.300:FF:000417">
    <property type="entry name" value="Cell division inhibitor SulA"/>
    <property type="match status" value="1"/>
</dbReference>
<dbReference type="Gene3D" id="3.40.50.300">
    <property type="entry name" value="P-loop containing nucleotide triphosphate hydrolases"/>
    <property type="match status" value="1"/>
</dbReference>
<dbReference type="HAMAP" id="MF_01179">
    <property type="entry name" value="SulA"/>
    <property type="match status" value="1"/>
</dbReference>
<dbReference type="InterPro" id="IPR004596">
    <property type="entry name" value="Cell_div_suppressor_SulA"/>
</dbReference>
<dbReference type="InterPro" id="IPR027417">
    <property type="entry name" value="P-loop_NTPase"/>
</dbReference>
<dbReference type="InterPro" id="IPR050356">
    <property type="entry name" value="SulA_CellDiv_inhibitor"/>
</dbReference>
<dbReference type="InterPro" id="IPR047696">
    <property type="entry name" value="SulA_enterobact"/>
</dbReference>
<dbReference type="NCBIfam" id="NF007892">
    <property type="entry name" value="PRK10595.1"/>
    <property type="match status" value="1"/>
</dbReference>
<dbReference type="NCBIfam" id="TIGR00623">
    <property type="entry name" value="SOS_SulA_coli"/>
    <property type="match status" value="1"/>
</dbReference>
<dbReference type="PANTHER" id="PTHR35369">
    <property type="entry name" value="BLR3025 PROTEIN-RELATED"/>
    <property type="match status" value="1"/>
</dbReference>
<dbReference type="PANTHER" id="PTHR35369:SF4">
    <property type="entry name" value="CELL DIVISION INHIBITOR SULA"/>
    <property type="match status" value="1"/>
</dbReference>
<dbReference type="Pfam" id="PF03846">
    <property type="entry name" value="SulA"/>
    <property type="match status" value="1"/>
</dbReference>
<dbReference type="PIRSF" id="PIRSF003093">
    <property type="entry name" value="SulA"/>
    <property type="match status" value="1"/>
</dbReference>
<dbReference type="SUPFAM" id="SSF52540">
    <property type="entry name" value="P-loop containing nucleoside triphosphate hydrolases"/>
    <property type="match status" value="1"/>
</dbReference>
<accession>A9R2N0</accession>
<protein>
    <recommendedName>
        <fullName evidence="1">Cell division inhibitor SulA</fullName>
    </recommendedName>
</protein>
<keyword id="KW-0131">Cell cycle</keyword>
<keyword id="KW-0132">Cell division</keyword>
<keyword id="KW-0227">DNA damage</keyword>
<keyword id="KW-0717">Septation</keyword>
<keyword id="KW-0742">SOS response</keyword>
<proteinExistence type="inferred from homology"/>
<comment type="function">
    <text evidence="1">Component of the SOS system and an inhibitor of cell division. Accumulation of SulA causes rapid cessation of cell division and the appearance of long, non-septate filaments. In the presence of GTP, binds a polymerization-competent form of FtsZ in a 1:1 ratio, thus inhibiting FtsZ polymerization and therefore preventing it from participating in the assembly of the Z ring. This mechanism prevents the premature segregation of damaged DNA to daughter cells during cell division.</text>
</comment>
<comment type="subunit">
    <text evidence="1">Interacts with FtsZ.</text>
</comment>
<comment type="induction">
    <text evidence="1">By DNA damage, as part of the SOS response.</text>
</comment>
<comment type="PTM">
    <text evidence="1">Is rapidly cleaved and degraded by the Lon protease once DNA damage is repaired.</text>
</comment>
<comment type="similarity">
    <text evidence="1">Belongs to the SulA family.</text>
</comment>
<evidence type="ECO:0000255" key="1">
    <source>
        <dbReference type="HAMAP-Rule" id="MF_01179"/>
    </source>
</evidence>
<organism>
    <name type="scientific">Yersinia pestis bv. Antiqua (strain Angola)</name>
    <dbReference type="NCBI Taxonomy" id="349746"/>
    <lineage>
        <taxon>Bacteria</taxon>
        <taxon>Pseudomonadati</taxon>
        <taxon>Pseudomonadota</taxon>
        <taxon>Gammaproteobacteria</taxon>
        <taxon>Enterobacterales</taxon>
        <taxon>Yersiniaceae</taxon>
        <taxon>Yersinia</taxon>
    </lineage>
</organism>